<name>RL30_VIBVY</name>
<dbReference type="EMBL" id="BA000037">
    <property type="protein sequence ID" value="BAC93157.1"/>
    <property type="molecule type" value="Genomic_DNA"/>
</dbReference>
<dbReference type="RefSeq" id="WP_011078815.1">
    <property type="nucleotide sequence ID" value="NC_005139.1"/>
</dbReference>
<dbReference type="SMR" id="Q7MPH0"/>
<dbReference type="STRING" id="672.VV93_v1c03640"/>
<dbReference type="GeneID" id="93895048"/>
<dbReference type="KEGG" id="vvy:VV0393"/>
<dbReference type="eggNOG" id="COG1841">
    <property type="taxonomic scope" value="Bacteria"/>
</dbReference>
<dbReference type="HOGENOM" id="CLU_131047_1_4_6"/>
<dbReference type="Proteomes" id="UP000002675">
    <property type="component" value="Chromosome I"/>
</dbReference>
<dbReference type="GO" id="GO:0022625">
    <property type="term" value="C:cytosolic large ribosomal subunit"/>
    <property type="evidence" value="ECO:0007669"/>
    <property type="project" value="TreeGrafter"/>
</dbReference>
<dbReference type="GO" id="GO:0003735">
    <property type="term" value="F:structural constituent of ribosome"/>
    <property type="evidence" value="ECO:0007669"/>
    <property type="project" value="InterPro"/>
</dbReference>
<dbReference type="GO" id="GO:0006412">
    <property type="term" value="P:translation"/>
    <property type="evidence" value="ECO:0007669"/>
    <property type="project" value="UniProtKB-UniRule"/>
</dbReference>
<dbReference type="CDD" id="cd01658">
    <property type="entry name" value="Ribosomal_L30"/>
    <property type="match status" value="1"/>
</dbReference>
<dbReference type="FunFam" id="3.30.1390.20:FF:000001">
    <property type="entry name" value="50S ribosomal protein L30"/>
    <property type="match status" value="1"/>
</dbReference>
<dbReference type="Gene3D" id="3.30.1390.20">
    <property type="entry name" value="Ribosomal protein L30, ferredoxin-like fold domain"/>
    <property type="match status" value="1"/>
</dbReference>
<dbReference type="HAMAP" id="MF_01371_B">
    <property type="entry name" value="Ribosomal_uL30_B"/>
    <property type="match status" value="1"/>
</dbReference>
<dbReference type="InterPro" id="IPR036919">
    <property type="entry name" value="Ribo_uL30_ferredoxin-like_sf"/>
</dbReference>
<dbReference type="InterPro" id="IPR005996">
    <property type="entry name" value="Ribosomal_uL30_bac-type"/>
</dbReference>
<dbReference type="InterPro" id="IPR018038">
    <property type="entry name" value="Ribosomal_uL30_CS"/>
</dbReference>
<dbReference type="InterPro" id="IPR016082">
    <property type="entry name" value="Ribosomal_uL30_ferredoxin-like"/>
</dbReference>
<dbReference type="NCBIfam" id="TIGR01308">
    <property type="entry name" value="rpmD_bact"/>
    <property type="match status" value="1"/>
</dbReference>
<dbReference type="PANTHER" id="PTHR15892:SF2">
    <property type="entry name" value="LARGE RIBOSOMAL SUBUNIT PROTEIN UL30M"/>
    <property type="match status" value="1"/>
</dbReference>
<dbReference type="PANTHER" id="PTHR15892">
    <property type="entry name" value="MITOCHONDRIAL RIBOSOMAL PROTEIN L30"/>
    <property type="match status" value="1"/>
</dbReference>
<dbReference type="Pfam" id="PF00327">
    <property type="entry name" value="Ribosomal_L30"/>
    <property type="match status" value="1"/>
</dbReference>
<dbReference type="PIRSF" id="PIRSF002211">
    <property type="entry name" value="Ribosomal_L30_bac-type"/>
    <property type="match status" value="1"/>
</dbReference>
<dbReference type="SUPFAM" id="SSF55129">
    <property type="entry name" value="Ribosomal protein L30p/L7e"/>
    <property type="match status" value="1"/>
</dbReference>
<dbReference type="PROSITE" id="PS00634">
    <property type="entry name" value="RIBOSOMAL_L30"/>
    <property type="match status" value="1"/>
</dbReference>
<protein>
    <recommendedName>
        <fullName evidence="1">Large ribosomal subunit protein uL30</fullName>
    </recommendedName>
    <alternativeName>
        <fullName evidence="2">50S ribosomal protein L30</fullName>
    </alternativeName>
</protein>
<proteinExistence type="inferred from homology"/>
<reference key="1">
    <citation type="journal article" date="2003" name="Genome Res.">
        <title>Comparative genome analysis of Vibrio vulnificus, a marine pathogen.</title>
        <authorList>
            <person name="Chen C.-Y."/>
            <person name="Wu K.-M."/>
            <person name="Chang Y.-C."/>
            <person name="Chang C.-H."/>
            <person name="Tsai H.-C."/>
            <person name="Liao T.-L."/>
            <person name="Liu Y.-M."/>
            <person name="Chen H.-J."/>
            <person name="Shen A.B.-T."/>
            <person name="Li J.-C."/>
            <person name="Su T.-L."/>
            <person name="Shao C.-P."/>
            <person name="Lee C.-T."/>
            <person name="Hor L.-I."/>
            <person name="Tsai S.-F."/>
        </authorList>
    </citation>
    <scope>NUCLEOTIDE SEQUENCE [LARGE SCALE GENOMIC DNA]</scope>
    <source>
        <strain>YJ016</strain>
    </source>
</reference>
<evidence type="ECO:0000255" key="1">
    <source>
        <dbReference type="HAMAP-Rule" id="MF_01371"/>
    </source>
</evidence>
<evidence type="ECO:0000305" key="2"/>
<organism>
    <name type="scientific">Vibrio vulnificus (strain YJ016)</name>
    <dbReference type="NCBI Taxonomy" id="196600"/>
    <lineage>
        <taxon>Bacteria</taxon>
        <taxon>Pseudomonadati</taxon>
        <taxon>Pseudomonadota</taxon>
        <taxon>Gammaproteobacteria</taxon>
        <taxon>Vibrionales</taxon>
        <taxon>Vibrionaceae</taxon>
        <taxon>Vibrio</taxon>
    </lineage>
</organism>
<sequence length="58" mass="6626">MATIKVTQTKSSIGRLPKHKATLRGLGLRRINHTVELEDTPCIRGMINKVYYMVKVEE</sequence>
<gene>
    <name evidence="1" type="primary">rpmD</name>
    <name type="ordered locus">VV0393</name>
</gene>
<feature type="chain" id="PRO_0000273888" description="Large ribosomal subunit protein uL30">
    <location>
        <begin position="1"/>
        <end position="58"/>
    </location>
</feature>
<comment type="subunit">
    <text evidence="1">Part of the 50S ribosomal subunit.</text>
</comment>
<comment type="similarity">
    <text evidence="1">Belongs to the universal ribosomal protein uL30 family.</text>
</comment>
<keyword id="KW-0687">Ribonucleoprotein</keyword>
<keyword id="KW-0689">Ribosomal protein</keyword>
<accession>Q7MPH0</accession>